<sequence length="566" mass="62558">MRQSTYLAPTMRDVPADAEAISHQLMLRAGMMRQIAAGVYAYLPLAKRTIAKIEAIIREELDAIGAQELTLPSLHPAELWQASGRWEAMGDELVRLKDRHNRDFALGPTHEEVITSLIKDGIASYKKLPLCVYQVQTKFRDERRPRFGLLRGREFIMKDAYSFHDSPESLDEAYWQMHGAYSRIFTRVGLEFRPVIADSGAMGGKDTHEFMALASVGEDTVVYSDGSDYAANLEMAKAALPEAPSVQAHGLLEKRATPEAKTVDEAAEALGFDADDIFKALVVVVDDVLSLFILRGNDELNEVKALHELGAKTLRMASEEEVVAAFGATPGSIGPVGVKDVPIYADYRIRSMERIACGANETGYHYVNVGPGRDYEVTAYKDLRTVREGDPSPDGKGTLRFAEGIEIGQIFKLGTRYSESLDAKYLDGQGKAQPFLMGCYGIGVSRTLAAVIEQHHDEAGIVWPKAVAPFDVHLLALNVKNEDQKTLAEQLYSDIRQAGIDVLYDDRPERAGVKFKDADLIGLPVRVAVGKRAGEGIIEVKVRKTGEQLELTASELVRWLNDFLRE</sequence>
<proteinExistence type="inferred from homology"/>
<evidence type="ECO:0000255" key="1">
    <source>
        <dbReference type="HAMAP-Rule" id="MF_01569"/>
    </source>
</evidence>
<organism>
    <name type="scientific">Shouchella clausii (strain KSM-K16)</name>
    <name type="common">Alkalihalobacillus clausii</name>
    <dbReference type="NCBI Taxonomy" id="66692"/>
    <lineage>
        <taxon>Bacteria</taxon>
        <taxon>Bacillati</taxon>
        <taxon>Bacillota</taxon>
        <taxon>Bacilli</taxon>
        <taxon>Bacillales</taxon>
        <taxon>Bacillaceae</taxon>
        <taxon>Shouchella</taxon>
    </lineage>
</organism>
<protein>
    <recommendedName>
        <fullName evidence="1">Proline--tRNA ligase</fullName>
        <ecNumber evidence="1">6.1.1.15</ecNumber>
    </recommendedName>
    <alternativeName>
        <fullName evidence="1">Prolyl-tRNA synthetase</fullName>
        <shortName evidence="1">ProRS</shortName>
    </alternativeName>
</protein>
<feature type="chain" id="PRO_0000248646" description="Proline--tRNA ligase">
    <location>
        <begin position="1"/>
        <end position="566"/>
    </location>
</feature>
<gene>
    <name evidence="1" type="primary">proS</name>
    <name type="ordered locus">ABC2234</name>
</gene>
<comment type="function">
    <text evidence="1">Catalyzes the attachment of proline to tRNA(Pro) in a two-step reaction: proline is first activated by ATP to form Pro-AMP and then transferred to the acceptor end of tRNA(Pro). As ProRS can inadvertently accommodate and process non-cognate amino acids such as alanine and cysteine, to avoid such errors it has two additional distinct editing activities against alanine. One activity is designated as 'pretransfer' editing and involves the tRNA(Pro)-independent hydrolysis of activated Ala-AMP. The other activity is designated 'posttransfer' editing and involves deacylation of mischarged Ala-tRNA(Pro). The misacylated Cys-tRNA(Pro) is not edited by ProRS.</text>
</comment>
<comment type="catalytic activity">
    <reaction evidence="1">
        <text>tRNA(Pro) + L-proline + ATP = L-prolyl-tRNA(Pro) + AMP + diphosphate</text>
        <dbReference type="Rhea" id="RHEA:14305"/>
        <dbReference type="Rhea" id="RHEA-COMP:9700"/>
        <dbReference type="Rhea" id="RHEA-COMP:9702"/>
        <dbReference type="ChEBI" id="CHEBI:30616"/>
        <dbReference type="ChEBI" id="CHEBI:33019"/>
        <dbReference type="ChEBI" id="CHEBI:60039"/>
        <dbReference type="ChEBI" id="CHEBI:78442"/>
        <dbReference type="ChEBI" id="CHEBI:78532"/>
        <dbReference type="ChEBI" id="CHEBI:456215"/>
        <dbReference type="EC" id="6.1.1.15"/>
    </reaction>
</comment>
<comment type="subunit">
    <text evidence="1">Homodimer.</text>
</comment>
<comment type="subcellular location">
    <subcellularLocation>
        <location evidence="1">Cytoplasm</location>
    </subcellularLocation>
</comment>
<comment type="domain">
    <text evidence="1">Consists of three domains: the N-terminal catalytic domain, the editing domain and the C-terminal anticodon-binding domain.</text>
</comment>
<comment type="similarity">
    <text evidence="1">Belongs to the class-II aminoacyl-tRNA synthetase family. ProS type 1 subfamily.</text>
</comment>
<reference key="1">
    <citation type="submission" date="2003-10" db="EMBL/GenBank/DDBJ databases">
        <title>The complete genome sequence of the alkaliphilic Bacillus clausii KSM-K16.</title>
        <authorList>
            <person name="Takaki Y."/>
            <person name="Kageyama Y."/>
            <person name="Shimamura S."/>
            <person name="Suzuki H."/>
            <person name="Nishi S."/>
            <person name="Hatada Y."/>
            <person name="Kawai S."/>
            <person name="Ito S."/>
            <person name="Horikoshi K."/>
        </authorList>
    </citation>
    <scope>NUCLEOTIDE SEQUENCE [LARGE SCALE GENOMIC DNA]</scope>
    <source>
        <strain>KSM-K16</strain>
    </source>
</reference>
<accession>Q5WFT6</accession>
<keyword id="KW-0030">Aminoacyl-tRNA synthetase</keyword>
<keyword id="KW-0067">ATP-binding</keyword>
<keyword id="KW-0963">Cytoplasm</keyword>
<keyword id="KW-0436">Ligase</keyword>
<keyword id="KW-0547">Nucleotide-binding</keyword>
<keyword id="KW-0648">Protein biosynthesis</keyword>
<keyword id="KW-1185">Reference proteome</keyword>
<dbReference type="EC" id="6.1.1.15" evidence="1"/>
<dbReference type="EMBL" id="AP006627">
    <property type="protein sequence ID" value="BAD64769.1"/>
    <property type="molecule type" value="Genomic_DNA"/>
</dbReference>
<dbReference type="RefSeq" id="WP_011247077.1">
    <property type="nucleotide sequence ID" value="NC_006582.1"/>
</dbReference>
<dbReference type="SMR" id="Q5WFT6"/>
<dbReference type="STRING" id="66692.ABC2234"/>
<dbReference type="KEGG" id="bcl:ABC2234"/>
<dbReference type="eggNOG" id="COG0442">
    <property type="taxonomic scope" value="Bacteria"/>
</dbReference>
<dbReference type="HOGENOM" id="CLU_016739_0_0_9"/>
<dbReference type="OrthoDB" id="9809052at2"/>
<dbReference type="Proteomes" id="UP000001168">
    <property type="component" value="Chromosome"/>
</dbReference>
<dbReference type="GO" id="GO:0005829">
    <property type="term" value="C:cytosol"/>
    <property type="evidence" value="ECO:0007669"/>
    <property type="project" value="TreeGrafter"/>
</dbReference>
<dbReference type="GO" id="GO:0002161">
    <property type="term" value="F:aminoacyl-tRNA deacylase activity"/>
    <property type="evidence" value="ECO:0007669"/>
    <property type="project" value="InterPro"/>
</dbReference>
<dbReference type="GO" id="GO:0005524">
    <property type="term" value="F:ATP binding"/>
    <property type="evidence" value="ECO:0007669"/>
    <property type="project" value="UniProtKB-UniRule"/>
</dbReference>
<dbReference type="GO" id="GO:0140096">
    <property type="term" value="F:catalytic activity, acting on a protein"/>
    <property type="evidence" value="ECO:0007669"/>
    <property type="project" value="UniProtKB-ARBA"/>
</dbReference>
<dbReference type="GO" id="GO:0004827">
    <property type="term" value="F:proline-tRNA ligase activity"/>
    <property type="evidence" value="ECO:0007669"/>
    <property type="project" value="UniProtKB-UniRule"/>
</dbReference>
<dbReference type="GO" id="GO:0016740">
    <property type="term" value="F:transferase activity"/>
    <property type="evidence" value="ECO:0007669"/>
    <property type="project" value="UniProtKB-ARBA"/>
</dbReference>
<dbReference type="GO" id="GO:0006433">
    <property type="term" value="P:prolyl-tRNA aminoacylation"/>
    <property type="evidence" value="ECO:0007669"/>
    <property type="project" value="UniProtKB-UniRule"/>
</dbReference>
<dbReference type="CDD" id="cd04334">
    <property type="entry name" value="ProRS-INS"/>
    <property type="match status" value="1"/>
</dbReference>
<dbReference type="CDD" id="cd00861">
    <property type="entry name" value="ProRS_anticodon_short"/>
    <property type="match status" value="1"/>
</dbReference>
<dbReference type="CDD" id="cd00779">
    <property type="entry name" value="ProRS_core_prok"/>
    <property type="match status" value="1"/>
</dbReference>
<dbReference type="FunFam" id="3.30.930.10:FF:000042">
    <property type="entry name" value="probable proline--tRNA ligase, mitochondrial"/>
    <property type="match status" value="1"/>
</dbReference>
<dbReference type="FunFam" id="3.30.930.10:FF:000062">
    <property type="entry name" value="Proline--tRNA ligase"/>
    <property type="match status" value="1"/>
</dbReference>
<dbReference type="FunFam" id="3.40.50.800:FF:000011">
    <property type="entry name" value="Proline--tRNA ligase"/>
    <property type="match status" value="1"/>
</dbReference>
<dbReference type="Gene3D" id="3.40.50.800">
    <property type="entry name" value="Anticodon-binding domain"/>
    <property type="match status" value="1"/>
</dbReference>
<dbReference type="Gene3D" id="3.30.930.10">
    <property type="entry name" value="Bira Bifunctional Protein, Domain 2"/>
    <property type="match status" value="2"/>
</dbReference>
<dbReference type="HAMAP" id="MF_01569">
    <property type="entry name" value="Pro_tRNA_synth_type1"/>
    <property type="match status" value="1"/>
</dbReference>
<dbReference type="InterPro" id="IPR002314">
    <property type="entry name" value="aa-tRNA-synt_IIb"/>
</dbReference>
<dbReference type="InterPro" id="IPR006195">
    <property type="entry name" value="aa-tRNA-synth_II"/>
</dbReference>
<dbReference type="InterPro" id="IPR045864">
    <property type="entry name" value="aa-tRNA-synth_II/BPL/LPL"/>
</dbReference>
<dbReference type="InterPro" id="IPR004154">
    <property type="entry name" value="Anticodon-bd"/>
</dbReference>
<dbReference type="InterPro" id="IPR036621">
    <property type="entry name" value="Anticodon-bd_dom_sf"/>
</dbReference>
<dbReference type="InterPro" id="IPR002316">
    <property type="entry name" value="Pro-tRNA-ligase_IIa"/>
</dbReference>
<dbReference type="InterPro" id="IPR004500">
    <property type="entry name" value="Pro-tRNA-synth_IIa_bac-type"/>
</dbReference>
<dbReference type="InterPro" id="IPR023717">
    <property type="entry name" value="Pro-tRNA-Synthase_IIa_type1"/>
</dbReference>
<dbReference type="InterPro" id="IPR050062">
    <property type="entry name" value="Pro-tRNA_synthetase"/>
</dbReference>
<dbReference type="InterPro" id="IPR044140">
    <property type="entry name" value="ProRS_anticodon_short"/>
</dbReference>
<dbReference type="InterPro" id="IPR033730">
    <property type="entry name" value="ProRS_core_prok"/>
</dbReference>
<dbReference type="InterPro" id="IPR036754">
    <property type="entry name" value="YbaK/aa-tRNA-synt-asso_dom_sf"/>
</dbReference>
<dbReference type="InterPro" id="IPR007214">
    <property type="entry name" value="YbaK/aa-tRNA-synth-assoc-dom"/>
</dbReference>
<dbReference type="NCBIfam" id="NF006625">
    <property type="entry name" value="PRK09194.1"/>
    <property type="match status" value="1"/>
</dbReference>
<dbReference type="NCBIfam" id="TIGR00409">
    <property type="entry name" value="proS_fam_II"/>
    <property type="match status" value="1"/>
</dbReference>
<dbReference type="PANTHER" id="PTHR42753">
    <property type="entry name" value="MITOCHONDRIAL RIBOSOME PROTEIN L39/PROLYL-TRNA LIGASE FAMILY MEMBER"/>
    <property type="match status" value="1"/>
</dbReference>
<dbReference type="PANTHER" id="PTHR42753:SF2">
    <property type="entry name" value="PROLINE--TRNA LIGASE"/>
    <property type="match status" value="1"/>
</dbReference>
<dbReference type="Pfam" id="PF03129">
    <property type="entry name" value="HGTP_anticodon"/>
    <property type="match status" value="1"/>
</dbReference>
<dbReference type="Pfam" id="PF00587">
    <property type="entry name" value="tRNA-synt_2b"/>
    <property type="match status" value="1"/>
</dbReference>
<dbReference type="Pfam" id="PF04073">
    <property type="entry name" value="tRNA_edit"/>
    <property type="match status" value="1"/>
</dbReference>
<dbReference type="PRINTS" id="PR01046">
    <property type="entry name" value="TRNASYNTHPRO"/>
</dbReference>
<dbReference type="SUPFAM" id="SSF52954">
    <property type="entry name" value="Class II aaRS ABD-related"/>
    <property type="match status" value="1"/>
</dbReference>
<dbReference type="SUPFAM" id="SSF55681">
    <property type="entry name" value="Class II aaRS and biotin synthetases"/>
    <property type="match status" value="1"/>
</dbReference>
<dbReference type="SUPFAM" id="SSF55826">
    <property type="entry name" value="YbaK/ProRS associated domain"/>
    <property type="match status" value="1"/>
</dbReference>
<dbReference type="PROSITE" id="PS50862">
    <property type="entry name" value="AA_TRNA_LIGASE_II"/>
    <property type="match status" value="1"/>
</dbReference>
<name>SYP_SHOC1</name>